<accession>Q1CAM4</accession>
<keyword id="KW-0012">Acyltransferase</keyword>
<keyword id="KW-0441">Lipid A biosynthesis</keyword>
<keyword id="KW-0444">Lipid biosynthesis</keyword>
<keyword id="KW-0443">Lipid metabolism</keyword>
<keyword id="KW-0677">Repeat</keyword>
<keyword id="KW-0808">Transferase</keyword>
<organism>
    <name type="scientific">Yersinia pestis bv. Antiqua (strain Antiqua)</name>
    <dbReference type="NCBI Taxonomy" id="360102"/>
    <lineage>
        <taxon>Bacteria</taxon>
        <taxon>Pseudomonadati</taxon>
        <taxon>Pseudomonadota</taxon>
        <taxon>Gammaproteobacteria</taxon>
        <taxon>Enterobacterales</taxon>
        <taxon>Yersiniaceae</taxon>
        <taxon>Yersinia</taxon>
    </lineage>
</organism>
<proteinExistence type="inferred from homology"/>
<gene>
    <name evidence="1" type="primary">lpxD</name>
    <name type="ordered locus">YPA_0530</name>
</gene>
<feature type="chain" id="PRO_0000264461" description="UDP-3-O-(3-hydroxymyristoyl)glucosamine N-acyltransferase">
    <location>
        <begin position="1"/>
        <end position="340"/>
    </location>
</feature>
<feature type="active site" description="Proton acceptor" evidence="1">
    <location>
        <position position="239"/>
    </location>
</feature>
<name>LPXD_YERPA</name>
<comment type="function">
    <text evidence="1">Catalyzes the N-acylation of UDP-3-O-(hydroxytetradecanoyl)glucosamine using 3-hydroxytetradecanoyl-ACP as the acyl donor. Is involved in the biosynthesis of lipid A, a phosphorylated glycolipid that anchors the lipopolysaccharide to the outer membrane of the cell.</text>
</comment>
<comment type="catalytic activity">
    <reaction evidence="1">
        <text>a UDP-3-O-[(3R)-3-hydroxyacyl]-alpha-D-glucosamine + a (3R)-hydroxyacyl-[ACP] = a UDP-2-N,3-O-bis[(3R)-3-hydroxyacyl]-alpha-D-glucosamine + holo-[ACP] + H(+)</text>
        <dbReference type="Rhea" id="RHEA:53836"/>
        <dbReference type="Rhea" id="RHEA-COMP:9685"/>
        <dbReference type="Rhea" id="RHEA-COMP:9945"/>
        <dbReference type="ChEBI" id="CHEBI:15378"/>
        <dbReference type="ChEBI" id="CHEBI:64479"/>
        <dbReference type="ChEBI" id="CHEBI:78827"/>
        <dbReference type="ChEBI" id="CHEBI:137740"/>
        <dbReference type="ChEBI" id="CHEBI:137748"/>
        <dbReference type="EC" id="2.3.1.191"/>
    </reaction>
</comment>
<comment type="catalytic activity">
    <reaction evidence="1">
        <text>UDP-3-O-[(3R)-3-hydroxytetradecanoyl]-alpha-D-glucosamine + (3R)-hydroxytetradecanoyl-[ACP] = UDP-2-N,3-O-bis[(3R)-3-hydroxytetradecanoyl]-alpha-D-glucosamine + holo-[ACP] + H(+)</text>
        <dbReference type="Rhea" id="RHEA:17817"/>
        <dbReference type="Rhea" id="RHEA-COMP:9646"/>
        <dbReference type="Rhea" id="RHEA-COMP:9685"/>
        <dbReference type="ChEBI" id="CHEBI:15378"/>
        <dbReference type="ChEBI" id="CHEBI:64479"/>
        <dbReference type="ChEBI" id="CHEBI:71573"/>
        <dbReference type="ChEBI" id="CHEBI:78474"/>
        <dbReference type="ChEBI" id="CHEBI:78847"/>
    </reaction>
</comment>
<comment type="pathway">
    <text evidence="1">Glycolipid biosynthesis; lipid IV(A) biosynthesis; lipid IV(A) from (3R)-3-hydroxytetradecanoyl-[acyl-carrier-protein] and UDP-N-acetyl-alpha-D-glucosamine: step 3/6.</text>
</comment>
<comment type="subunit">
    <text evidence="1">Homotrimer.</text>
</comment>
<comment type="similarity">
    <text evidence="1">Belongs to the transferase hexapeptide repeat family. LpxD subfamily.</text>
</comment>
<sequence>MPSIRLADLAQQLDAQVHGDGDLVITGIASMHSAQPEQITFLSNSRYREQLASCNAGAVVLTEADLPFCKVAALVVENPYFTYARMAQIMDTTPQPAQDIAPSAVISPQATLGEGVSVGANAVIESGVVLGDNVVIGAGCFIGKNTHIGAGSRLWANVSIYHEVVIGQNCLIQSGTVIGADGFGYANDRGNWVKIPQLGSVHIGDRVEIGACTTIDRGALDNTIIGNGVIIDNQCQIAHNVVIGDNTAVAGGVIMAGSLKVGRYCMIGGASVINGHMEICDKVTITGMGMVMRPITEPGLYSSGIPLQPNKMWRKTAALVMNIDGINKRLKAVERKIDKE</sequence>
<reference key="1">
    <citation type="journal article" date="2006" name="J. Bacteriol.">
        <title>Complete genome sequence of Yersinia pestis strains Antiqua and Nepal516: evidence of gene reduction in an emerging pathogen.</title>
        <authorList>
            <person name="Chain P.S.G."/>
            <person name="Hu P."/>
            <person name="Malfatti S.A."/>
            <person name="Radnedge L."/>
            <person name="Larimer F."/>
            <person name="Vergez L.M."/>
            <person name="Worsham P."/>
            <person name="Chu M.C."/>
            <person name="Andersen G.L."/>
        </authorList>
    </citation>
    <scope>NUCLEOTIDE SEQUENCE [LARGE SCALE GENOMIC DNA]</scope>
    <source>
        <strain>Antiqua</strain>
    </source>
</reference>
<evidence type="ECO:0000255" key="1">
    <source>
        <dbReference type="HAMAP-Rule" id="MF_00523"/>
    </source>
</evidence>
<protein>
    <recommendedName>
        <fullName evidence="1">UDP-3-O-(3-hydroxymyristoyl)glucosamine N-acyltransferase</fullName>
        <shortName evidence="1">UDP-3-O-(3-OHC14)-GlcN N-acyltransferase</shortName>
        <ecNumber evidence="1">2.3.1.191</ecNumber>
    </recommendedName>
    <alternativeName>
        <fullName evidence="1">UDP-3-O-(3-hydroxytetradecanoyl)glucosamine N-acyltransferase</fullName>
    </alternativeName>
</protein>
<dbReference type="EC" id="2.3.1.191" evidence="1"/>
<dbReference type="EMBL" id="CP000308">
    <property type="protein sequence ID" value="ABG12498.1"/>
    <property type="molecule type" value="Genomic_DNA"/>
</dbReference>
<dbReference type="RefSeq" id="WP_002212141.1">
    <property type="nucleotide sequence ID" value="NZ_CP009906.1"/>
</dbReference>
<dbReference type="SMR" id="Q1CAM4"/>
<dbReference type="GeneID" id="57977507"/>
<dbReference type="KEGG" id="ypa:YPA_0530"/>
<dbReference type="UniPathway" id="UPA00359">
    <property type="reaction ID" value="UER00479"/>
</dbReference>
<dbReference type="Proteomes" id="UP000001971">
    <property type="component" value="Chromosome"/>
</dbReference>
<dbReference type="GO" id="GO:0016020">
    <property type="term" value="C:membrane"/>
    <property type="evidence" value="ECO:0007669"/>
    <property type="project" value="GOC"/>
</dbReference>
<dbReference type="GO" id="GO:0016410">
    <property type="term" value="F:N-acyltransferase activity"/>
    <property type="evidence" value="ECO:0007669"/>
    <property type="project" value="InterPro"/>
</dbReference>
<dbReference type="GO" id="GO:0103118">
    <property type="term" value="F:UDP-3-O-(R-3-hydroxymyristoyl)-glucosamine N-acyltransferase activity"/>
    <property type="evidence" value="ECO:0007669"/>
    <property type="project" value="UniProtKB-EC"/>
</dbReference>
<dbReference type="GO" id="GO:0009245">
    <property type="term" value="P:lipid A biosynthetic process"/>
    <property type="evidence" value="ECO:0007669"/>
    <property type="project" value="UniProtKB-UniRule"/>
</dbReference>
<dbReference type="CDD" id="cd03352">
    <property type="entry name" value="LbH_LpxD"/>
    <property type="match status" value="1"/>
</dbReference>
<dbReference type="FunFam" id="2.160.10.10:FF:000005">
    <property type="entry name" value="UDP-3-O-(3-hydroxymyristoyl)glucosamine N-acyltransferase"/>
    <property type="match status" value="1"/>
</dbReference>
<dbReference type="Gene3D" id="1.20.5.170">
    <property type="match status" value="1"/>
</dbReference>
<dbReference type="Gene3D" id="2.160.10.10">
    <property type="entry name" value="Hexapeptide repeat proteins"/>
    <property type="match status" value="1"/>
</dbReference>
<dbReference type="Gene3D" id="3.40.1390.10">
    <property type="entry name" value="MurE/MurF, N-terminal domain"/>
    <property type="match status" value="1"/>
</dbReference>
<dbReference type="HAMAP" id="MF_00523">
    <property type="entry name" value="LpxD"/>
    <property type="match status" value="1"/>
</dbReference>
<dbReference type="InterPro" id="IPR001451">
    <property type="entry name" value="Hexapep"/>
</dbReference>
<dbReference type="InterPro" id="IPR018357">
    <property type="entry name" value="Hexapep_transf_CS"/>
</dbReference>
<dbReference type="InterPro" id="IPR007691">
    <property type="entry name" value="LpxD"/>
</dbReference>
<dbReference type="InterPro" id="IPR011004">
    <property type="entry name" value="Trimer_LpxA-like_sf"/>
</dbReference>
<dbReference type="InterPro" id="IPR020573">
    <property type="entry name" value="UDP_GlcNAc_AcTrfase_non-rep"/>
</dbReference>
<dbReference type="NCBIfam" id="TIGR01853">
    <property type="entry name" value="lipid_A_lpxD"/>
    <property type="match status" value="1"/>
</dbReference>
<dbReference type="NCBIfam" id="NF002060">
    <property type="entry name" value="PRK00892.1"/>
    <property type="match status" value="1"/>
</dbReference>
<dbReference type="PANTHER" id="PTHR43378">
    <property type="entry name" value="UDP-3-O-ACYLGLUCOSAMINE N-ACYLTRANSFERASE"/>
    <property type="match status" value="1"/>
</dbReference>
<dbReference type="PANTHER" id="PTHR43378:SF2">
    <property type="entry name" value="UDP-3-O-ACYLGLUCOSAMINE N-ACYLTRANSFERASE 1, MITOCHONDRIAL-RELATED"/>
    <property type="match status" value="1"/>
</dbReference>
<dbReference type="Pfam" id="PF00132">
    <property type="entry name" value="Hexapep"/>
    <property type="match status" value="3"/>
</dbReference>
<dbReference type="Pfam" id="PF04613">
    <property type="entry name" value="LpxD"/>
    <property type="match status" value="1"/>
</dbReference>
<dbReference type="SUPFAM" id="SSF51161">
    <property type="entry name" value="Trimeric LpxA-like enzymes"/>
    <property type="match status" value="1"/>
</dbReference>
<dbReference type="PROSITE" id="PS00101">
    <property type="entry name" value="HEXAPEP_TRANSFERASES"/>
    <property type="match status" value="3"/>
</dbReference>